<name>RF2_MYCSJ</name>
<protein>
    <recommendedName>
        <fullName evidence="1">Peptide chain release factor 2</fullName>
        <shortName evidence="1">RF-2</shortName>
    </recommendedName>
</protein>
<reference key="1">
    <citation type="submission" date="2007-02" db="EMBL/GenBank/DDBJ databases">
        <title>Complete sequence of Mycobacterium sp. JLS.</title>
        <authorList>
            <consortium name="US DOE Joint Genome Institute"/>
            <person name="Copeland A."/>
            <person name="Lucas S."/>
            <person name="Lapidus A."/>
            <person name="Barry K."/>
            <person name="Detter J.C."/>
            <person name="Glavina del Rio T."/>
            <person name="Hammon N."/>
            <person name="Israni S."/>
            <person name="Dalin E."/>
            <person name="Tice H."/>
            <person name="Pitluck S."/>
            <person name="Chain P."/>
            <person name="Malfatti S."/>
            <person name="Shin M."/>
            <person name="Vergez L."/>
            <person name="Schmutz J."/>
            <person name="Larimer F."/>
            <person name="Land M."/>
            <person name="Hauser L."/>
            <person name="Kyrpides N."/>
            <person name="Mikhailova N."/>
            <person name="Miller C.D."/>
            <person name="Anderson A.J."/>
            <person name="Sims R.C."/>
            <person name="Richardson P."/>
        </authorList>
    </citation>
    <scope>NUCLEOTIDE SEQUENCE [LARGE SCALE GENOMIC DNA]</scope>
    <source>
        <strain>JLS</strain>
    </source>
</reference>
<organism>
    <name type="scientific">Mycobacterium sp. (strain JLS)</name>
    <dbReference type="NCBI Taxonomy" id="164757"/>
    <lineage>
        <taxon>Bacteria</taxon>
        <taxon>Bacillati</taxon>
        <taxon>Actinomycetota</taxon>
        <taxon>Actinomycetes</taxon>
        <taxon>Mycobacteriales</taxon>
        <taxon>Mycobacteriaceae</taxon>
        <taxon>Mycobacterium</taxon>
    </lineage>
</organism>
<comment type="function">
    <text evidence="1">Peptide chain release factor 2 directs the termination of translation in response to the peptide chain termination codons UGA and UAA.</text>
</comment>
<comment type="subcellular location">
    <subcellularLocation>
        <location evidence="1">Cytoplasm</location>
    </subcellularLocation>
</comment>
<comment type="PTM">
    <text evidence="1">Methylated by PrmC. Methylation increases the termination efficiency of RF2.</text>
</comment>
<comment type="similarity">
    <text evidence="1">Belongs to the prokaryotic/mitochondrial release factor family.</text>
</comment>
<sequence>MDPDRQADIAALAATLTTVERVLDVDGLRDRIQKLEQEASDPNLWDDQSRAQKVTSELSHAQNELRRVEELRQRVEDLPVLYEMAAEEEGQDAENAGAEADAELAKLRVDIEAMEVRTLLSGEYDEREAVVTIRSGAGGVDAADWAEMLMRMYIRWAEQHDYPVEVFDTSYAEEAGIKSATFAVHAPYAYGTLSVEQGTHRLVRISPFDNQSRRQTSFADVEVLPVVETTDHIDVPETDLRVDVYRSSGPGGQSVNTTDSAVRLTHIPTGIVVTCQNEKSQLQNKVAAMRVLQAKLLARKKQEERAALDALKGDGGSSWGNQMRSYVLHPYQMVKDLRTEYEVGNPSAVLDGDIDGFLEAGIRWRNRRDDD</sequence>
<evidence type="ECO:0000255" key="1">
    <source>
        <dbReference type="HAMAP-Rule" id="MF_00094"/>
    </source>
</evidence>
<keyword id="KW-0963">Cytoplasm</keyword>
<keyword id="KW-0488">Methylation</keyword>
<keyword id="KW-0648">Protein biosynthesis</keyword>
<proteinExistence type="inferred from homology"/>
<accession>A3PWV0</accession>
<feature type="chain" id="PRO_1000005000" description="Peptide chain release factor 2">
    <location>
        <begin position="1"/>
        <end position="371"/>
    </location>
</feature>
<feature type="modified residue" description="N5-methylglutamine" evidence="1">
    <location>
        <position position="253"/>
    </location>
</feature>
<gene>
    <name evidence="1" type="primary">prfB</name>
    <name type="ordered locus">Mjls_1579</name>
</gene>
<dbReference type="EMBL" id="CP000580">
    <property type="protein sequence ID" value="ABN97377.1"/>
    <property type="molecule type" value="Genomic_DNA"/>
</dbReference>
<dbReference type="SMR" id="A3PWV0"/>
<dbReference type="KEGG" id="mjl:Mjls_1579"/>
<dbReference type="HOGENOM" id="CLU_036856_6_0_11"/>
<dbReference type="BioCyc" id="MSP164757:G1G8C-1596-MONOMER"/>
<dbReference type="GO" id="GO:0005737">
    <property type="term" value="C:cytoplasm"/>
    <property type="evidence" value="ECO:0007669"/>
    <property type="project" value="UniProtKB-SubCell"/>
</dbReference>
<dbReference type="GO" id="GO:0016149">
    <property type="term" value="F:translation release factor activity, codon specific"/>
    <property type="evidence" value="ECO:0007669"/>
    <property type="project" value="UniProtKB-UniRule"/>
</dbReference>
<dbReference type="FunFam" id="3.30.160.20:FF:000010">
    <property type="entry name" value="Peptide chain release factor 2"/>
    <property type="match status" value="1"/>
</dbReference>
<dbReference type="Gene3D" id="3.30.160.20">
    <property type="match status" value="1"/>
</dbReference>
<dbReference type="Gene3D" id="3.30.70.1660">
    <property type="match status" value="1"/>
</dbReference>
<dbReference type="Gene3D" id="1.20.58.410">
    <property type="entry name" value="Release factor"/>
    <property type="match status" value="1"/>
</dbReference>
<dbReference type="HAMAP" id="MF_00094">
    <property type="entry name" value="Rel_fac_2"/>
    <property type="match status" value="1"/>
</dbReference>
<dbReference type="InterPro" id="IPR005139">
    <property type="entry name" value="PCRF"/>
</dbReference>
<dbReference type="InterPro" id="IPR000352">
    <property type="entry name" value="Pep_chain_release_fac_I"/>
</dbReference>
<dbReference type="InterPro" id="IPR045853">
    <property type="entry name" value="Pep_chain_release_fac_I_sf"/>
</dbReference>
<dbReference type="InterPro" id="IPR004374">
    <property type="entry name" value="PrfB"/>
</dbReference>
<dbReference type="NCBIfam" id="TIGR00020">
    <property type="entry name" value="prfB"/>
    <property type="match status" value="1"/>
</dbReference>
<dbReference type="PANTHER" id="PTHR43116:SF3">
    <property type="entry name" value="CLASS I PEPTIDE CHAIN RELEASE FACTOR"/>
    <property type="match status" value="1"/>
</dbReference>
<dbReference type="PANTHER" id="PTHR43116">
    <property type="entry name" value="PEPTIDE CHAIN RELEASE FACTOR 2"/>
    <property type="match status" value="1"/>
</dbReference>
<dbReference type="Pfam" id="PF03462">
    <property type="entry name" value="PCRF"/>
    <property type="match status" value="1"/>
</dbReference>
<dbReference type="Pfam" id="PF00472">
    <property type="entry name" value="RF-1"/>
    <property type="match status" value="1"/>
</dbReference>
<dbReference type="SMART" id="SM00937">
    <property type="entry name" value="PCRF"/>
    <property type="match status" value="1"/>
</dbReference>
<dbReference type="SUPFAM" id="SSF75620">
    <property type="entry name" value="Release factor"/>
    <property type="match status" value="1"/>
</dbReference>
<dbReference type="PROSITE" id="PS00745">
    <property type="entry name" value="RF_PROK_I"/>
    <property type="match status" value="1"/>
</dbReference>